<comment type="similarity">
    <text evidence="1">Belongs to the universal ribosomal protein uS9 family.</text>
</comment>
<accession>Q3SF20</accession>
<reference key="1">
    <citation type="journal article" date="2006" name="J. Bacteriol.">
        <title>The genome sequence of the obligately chemolithoautotrophic, facultatively anaerobic bacterium Thiobacillus denitrificans.</title>
        <authorList>
            <person name="Beller H.R."/>
            <person name="Chain P.S."/>
            <person name="Letain T.E."/>
            <person name="Chakicherla A."/>
            <person name="Larimer F.W."/>
            <person name="Richardson P.M."/>
            <person name="Coleman M.A."/>
            <person name="Wood A.P."/>
            <person name="Kelly D.P."/>
        </authorList>
    </citation>
    <scope>NUCLEOTIDE SEQUENCE [LARGE SCALE GENOMIC DNA]</scope>
    <source>
        <strain>ATCC 25259 / T1</strain>
    </source>
</reference>
<organism>
    <name type="scientific">Thiobacillus denitrificans (strain ATCC 25259 / T1)</name>
    <dbReference type="NCBI Taxonomy" id="292415"/>
    <lineage>
        <taxon>Bacteria</taxon>
        <taxon>Pseudomonadati</taxon>
        <taxon>Pseudomonadota</taxon>
        <taxon>Betaproteobacteria</taxon>
        <taxon>Nitrosomonadales</taxon>
        <taxon>Thiobacillaceae</taxon>
        <taxon>Thiobacillus</taxon>
    </lineage>
</organism>
<protein>
    <recommendedName>
        <fullName evidence="1">Small ribosomal subunit protein uS9</fullName>
    </recommendedName>
    <alternativeName>
        <fullName evidence="2">30S ribosomal protein S9</fullName>
    </alternativeName>
</protein>
<name>RS9_THIDA</name>
<proteinExistence type="inferred from homology"/>
<gene>
    <name evidence="1" type="primary">rpsI</name>
    <name type="ordered locus">Tbd_0454</name>
</gene>
<sequence>MIGNYNYGTGRRKSSVARVFIKAGSGKIVVNDKPVDEYFSRETGRMIVRQPLVLTDNLNRFDIMVNVAGGGESGQAGAVRHGITRALIDLDAGMKPTLKAAGLVTRDAREVERKKVGFHKARRRKQFSKR</sequence>
<evidence type="ECO:0000255" key="1">
    <source>
        <dbReference type="HAMAP-Rule" id="MF_00532"/>
    </source>
</evidence>
<evidence type="ECO:0000305" key="2"/>
<feature type="chain" id="PRO_1000051360" description="Small ribosomal subunit protein uS9">
    <location>
        <begin position="1"/>
        <end position="130"/>
    </location>
</feature>
<dbReference type="EMBL" id="CP000116">
    <property type="protein sequence ID" value="AAZ96407.1"/>
    <property type="molecule type" value="Genomic_DNA"/>
</dbReference>
<dbReference type="RefSeq" id="WP_011310966.1">
    <property type="nucleotide sequence ID" value="NC_007404.1"/>
</dbReference>
<dbReference type="SMR" id="Q3SF20"/>
<dbReference type="STRING" id="292415.Tbd_0454"/>
<dbReference type="KEGG" id="tbd:Tbd_0454"/>
<dbReference type="eggNOG" id="COG0103">
    <property type="taxonomic scope" value="Bacteria"/>
</dbReference>
<dbReference type="HOGENOM" id="CLU_046483_2_1_4"/>
<dbReference type="OrthoDB" id="9803965at2"/>
<dbReference type="Proteomes" id="UP000008291">
    <property type="component" value="Chromosome"/>
</dbReference>
<dbReference type="GO" id="GO:0022627">
    <property type="term" value="C:cytosolic small ribosomal subunit"/>
    <property type="evidence" value="ECO:0007669"/>
    <property type="project" value="TreeGrafter"/>
</dbReference>
<dbReference type="GO" id="GO:0003723">
    <property type="term" value="F:RNA binding"/>
    <property type="evidence" value="ECO:0007669"/>
    <property type="project" value="TreeGrafter"/>
</dbReference>
<dbReference type="GO" id="GO:0003735">
    <property type="term" value="F:structural constituent of ribosome"/>
    <property type="evidence" value="ECO:0007669"/>
    <property type="project" value="InterPro"/>
</dbReference>
<dbReference type="GO" id="GO:0006412">
    <property type="term" value="P:translation"/>
    <property type="evidence" value="ECO:0007669"/>
    <property type="project" value="UniProtKB-UniRule"/>
</dbReference>
<dbReference type="FunFam" id="3.30.230.10:FF:000001">
    <property type="entry name" value="30S ribosomal protein S9"/>
    <property type="match status" value="1"/>
</dbReference>
<dbReference type="Gene3D" id="3.30.230.10">
    <property type="match status" value="1"/>
</dbReference>
<dbReference type="HAMAP" id="MF_00532_B">
    <property type="entry name" value="Ribosomal_uS9_B"/>
    <property type="match status" value="1"/>
</dbReference>
<dbReference type="InterPro" id="IPR020568">
    <property type="entry name" value="Ribosomal_Su5_D2-typ_SF"/>
</dbReference>
<dbReference type="InterPro" id="IPR000754">
    <property type="entry name" value="Ribosomal_uS9"/>
</dbReference>
<dbReference type="InterPro" id="IPR023035">
    <property type="entry name" value="Ribosomal_uS9_bac/plastid"/>
</dbReference>
<dbReference type="InterPro" id="IPR020574">
    <property type="entry name" value="Ribosomal_uS9_CS"/>
</dbReference>
<dbReference type="InterPro" id="IPR014721">
    <property type="entry name" value="Ribsml_uS5_D2-typ_fold_subgr"/>
</dbReference>
<dbReference type="NCBIfam" id="NF001099">
    <property type="entry name" value="PRK00132.1"/>
    <property type="match status" value="1"/>
</dbReference>
<dbReference type="PANTHER" id="PTHR21569">
    <property type="entry name" value="RIBOSOMAL PROTEIN S9"/>
    <property type="match status" value="1"/>
</dbReference>
<dbReference type="PANTHER" id="PTHR21569:SF1">
    <property type="entry name" value="SMALL RIBOSOMAL SUBUNIT PROTEIN US9M"/>
    <property type="match status" value="1"/>
</dbReference>
<dbReference type="Pfam" id="PF00380">
    <property type="entry name" value="Ribosomal_S9"/>
    <property type="match status" value="1"/>
</dbReference>
<dbReference type="SUPFAM" id="SSF54211">
    <property type="entry name" value="Ribosomal protein S5 domain 2-like"/>
    <property type="match status" value="1"/>
</dbReference>
<dbReference type="PROSITE" id="PS00360">
    <property type="entry name" value="RIBOSOMAL_S9"/>
    <property type="match status" value="1"/>
</dbReference>
<keyword id="KW-1185">Reference proteome</keyword>
<keyword id="KW-0687">Ribonucleoprotein</keyword>
<keyword id="KW-0689">Ribosomal protein</keyword>